<protein>
    <recommendedName>
        <fullName evidence="2">Large ribosomal subunit protein uL22c</fullName>
    </recommendedName>
    <alternativeName>
        <fullName>50S ribosomal protein L22, chloroplastic</fullName>
    </alternativeName>
</protein>
<geneLocation type="chloroplast"/>
<dbReference type="EMBL" id="AB002583">
    <property type="protein sequence ID" value="BAC76236.1"/>
    <property type="molecule type" value="Genomic_DNA"/>
</dbReference>
<dbReference type="RefSeq" id="NP_849074.1">
    <property type="nucleotide sequence ID" value="NC_004799.1"/>
</dbReference>
<dbReference type="SMR" id="Q85FV8"/>
<dbReference type="STRING" id="280699.Q85FV8"/>
<dbReference type="EnsemblPlants" id="CMV169CT">
    <property type="protein sequence ID" value="CMV169CT"/>
    <property type="gene ID" value="CMV169C"/>
</dbReference>
<dbReference type="GeneID" id="844978"/>
<dbReference type="Gramene" id="CMV169CT">
    <property type="protein sequence ID" value="CMV169CT"/>
    <property type="gene ID" value="CMV169C"/>
</dbReference>
<dbReference type="KEGG" id="cme:CymeCp142"/>
<dbReference type="eggNOG" id="KOG1711">
    <property type="taxonomic scope" value="Eukaryota"/>
</dbReference>
<dbReference type="HOGENOM" id="CLU_083987_3_3_1"/>
<dbReference type="Proteomes" id="UP000007014">
    <property type="component" value="Chloroplast"/>
</dbReference>
<dbReference type="GO" id="GO:0009507">
    <property type="term" value="C:chloroplast"/>
    <property type="evidence" value="ECO:0007669"/>
    <property type="project" value="UniProtKB-SubCell"/>
</dbReference>
<dbReference type="GO" id="GO:0015934">
    <property type="term" value="C:large ribosomal subunit"/>
    <property type="evidence" value="ECO:0007669"/>
    <property type="project" value="InterPro"/>
</dbReference>
<dbReference type="GO" id="GO:0019843">
    <property type="term" value="F:rRNA binding"/>
    <property type="evidence" value="ECO:0007669"/>
    <property type="project" value="UniProtKB-KW"/>
</dbReference>
<dbReference type="GO" id="GO:0003735">
    <property type="term" value="F:structural constituent of ribosome"/>
    <property type="evidence" value="ECO:0007669"/>
    <property type="project" value="InterPro"/>
</dbReference>
<dbReference type="GO" id="GO:0006412">
    <property type="term" value="P:translation"/>
    <property type="evidence" value="ECO:0007669"/>
    <property type="project" value="InterPro"/>
</dbReference>
<dbReference type="Gene3D" id="3.90.470.10">
    <property type="entry name" value="Ribosomal protein L22/L17"/>
    <property type="match status" value="1"/>
</dbReference>
<dbReference type="InterPro" id="IPR001063">
    <property type="entry name" value="Ribosomal_uL22"/>
</dbReference>
<dbReference type="InterPro" id="IPR047867">
    <property type="entry name" value="Ribosomal_uL22_bac/org-type"/>
</dbReference>
<dbReference type="InterPro" id="IPR036394">
    <property type="entry name" value="Ribosomal_uL22_sf"/>
</dbReference>
<dbReference type="PANTHER" id="PTHR13501">
    <property type="entry name" value="CHLOROPLAST 50S RIBOSOMAL PROTEIN L22-RELATED"/>
    <property type="match status" value="1"/>
</dbReference>
<dbReference type="PANTHER" id="PTHR13501:SF8">
    <property type="entry name" value="LARGE RIBOSOMAL SUBUNIT PROTEIN UL22M"/>
    <property type="match status" value="1"/>
</dbReference>
<dbReference type="Pfam" id="PF00237">
    <property type="entry name" value="Ribosomal_L22"/>
    <property type="match status" value="1"/>
</dbReference>
<dbReference type="SUPFAM" id="SSF54843">
    <property type="entry name" value="Ribosomal protein L22"/>
    <property type="match status" value="1"/>
</dbReference>
<evidence type="ECO:0000250" key="1"/>
<evidence type="ECO:0000305" key="2"/>
<organism>
    <name type="scientific">Cyanidioschyzon merolae (strain NIES-3377 / 10D)</name>
    <name type="common">Unicellular red alga</name>
    <dbReference type="NCBI Taxonomy" id="280699"/>
    <lineage>
        <taxon>Eukaryota</taxon>
        <taxon>Rhodophyta</taxon>
        <taxon>Bangiophyceae</taxon>
        <taxon>Cyanidiales</taxon>
        <taxon>Cyanidiaceae</taxon>
        <taxon>Cyanidioschyzon</taxon>
    </lineage>
</organism>
<accession>Q85FV8</accession>
<proteinExistence type="inferred from homology"/>
<gene>
    <name type="primary">rpl22</name>
</gene>
<keyword id="KW-0150">Chloroplast</keyword>
<keyword id="KW-0934">Plastid</keyword>
<keyword id="KW-1185">Reference proteome</keyword>
<keyword id="KW-0687">Ribonucleoprotein</keyword>
<keyword id="KW-0689">Ribosomal protein</keyword>
<keyword id="KW-0694">RNA-binding</keyword>
<keyword id="KW-0699">rRNA-binding</keyword>
<sequence length="95" mass="11100">MKYQAKYIRMSPTKVRRVVRLLDGMTYEKASQVVRFLPYRAATCVAKLLKSVNAQATQRVHFYVDQAPTLKRIRARAQSRAYPIKKRCCHITLEI</sequence>
<comment type="function">
    <text evidence="1">This protein binds specifically to 23S rRNA.</text>
</comment>
<comment type="function">
    <text evidence="1">The globular domain of the protein is located near the polypeptide exit tunnel on the outside of the subunit, while an extended beta-hairpin is found that lines the wall of the exit tunnel in the center of the 70S ribosome.</text>
</comment>
<comment type="subunit">
    <text>Part of the 50S ribosomal subunit.</text>
</comment>
<comment type="subcellular location">
    <subcellularLocation>
        <location>Plastid</location>
        <location>Chloroplast</location>
    </subcellularLocation>
</comment>
<comment type="similarity">
    <text evidence="2">Belongs to the universal ribosomal protein uL22 family.</text>
</comment>
<reference key="1">
    <citation type="journal article" date="2003" name="DNA Res.">
        <title>Complete sequence and analysis of the plastid genome of the unicellular red alga Cyanidioschyzon merolae.</title>
        <authorList>
            <person name="Ohta N."/>
            <person name="Matsuzaki M."/>
            <person name="Misumi O."/>
            <person name="Miyagishima S.-Y."/>
            <person name="Nozaki H."/>
            <person name="Tanaka K."/>
            <person name="Shin-i T."/>
            <person name="Kohara Y."/>
            <person name="Kuroiwa T."/>
        </authorList>
    </citation>
    <scope>NUCLEOTIDE SEQUENCE [LARGE SCALE GENOMIC DNA]</scope>
    <source>
        <strain>NIES-3377 / 10D</strain>
    </source>
</reference>
<name>RK22_CYAM1</name>
<feature type="chain" id="PRO_0000125302" description="Large ribosomal subunit protein uL22c">
    <location>
        <begin position="1"/>
        <end position="95"/>
    </location>
</feature>